<feature type="chain" id="PRO_1000011254" description="Phosphopantetheine adenylyltransferase">
    <location>
        <begin position="1"/>
        <end position="163"/>
    </location>
</feature>
<feature type="binding site" evidence="1">
    <location>
        <begin position="11"/>
        <end position="12"/>
    </location>
    <ligand>
        <name>ATP</name>
        <dbReference type="ChEBI" id="CHEBI:30616"/>
    </ligand>
</feature>
<feature type="binding site" evidence="1">
    <location>
        <position position="11"/>
    </location>
    <ligand>
        <name>substrate</name>
    </ligand>
</feature>
<feature type="binding site" evidence="1">
    <location>
        <position position="19"/>
    </location>
    <ligand>
        <name>ATP</name>
        <dbReference type="ChEBI" id="CHEBI:30616"/>
    </ligand>
</feature>
<feature type="binding site" evidence="1">
    <location>
        <position position="43"/>
    </location>
    <ligand>
        <name>substrate</name>
    </ligand>
</feature>
<feature type="binding site" evidence="1">
    <location>
        <position position="76"/>
    </location>
    <ligand>
        <name>substrate</name>
    </ligand>
</feature>
<feature type="binding site" evidence="1">
    <location>
        <position position="90"/>
    </location>
    <ligand>
        <name>substrate</name>
    </ligand>
</feature>
<feature type="binding site" evidence="1">
    <location>
        <begin position="91"/>
        <end position="93"/>
    </location>
    <ligand>
        <name>ATP</name>
        <dbReference type="ChEBI" id="CHEBI:30616"/>
    </ligand>
</feature>
<feature type="binding site" evidence="1">
    <location>
        <position position="101"/>
    </location>
    <ligand>
        <name>ATP</name>
        <dbReference type="ChEBI" id="CHEBI:30616"/>
    </ligand>
</feature>
<feature type="binding site" evidence="1">
    <location>
        <begin position="126"/>
        <end position="132"/>
    </location>
    <ligand>
        <name>ATP</name>
        <dbReference type="ChEBI" id="CHEBI:30616"/>
    </ligand>
</feature>
<feature type="site" description="Transition state stabilizer" evidence="1">
    <location>
        <position position="19"/>
    </location>
</feature>
<proteinExistence type="inferred from homology"/>
<accession>Q1J5R2</accession>
<gene>
    <name evidence="1" type="primary">coaD</name>
    <name type="ordered locus">MGAS10750_Spy1374</name>
</gene>
<reference key="1">
    <citation type="journal article" date="2006" name="Proc. Natl. Acad. Sci. U.S.A.">
        <title>Molecular genetic anatomy of inter- and intraserotype variation in the human bacterial pathogen group A Streptococcus.</title>
        <authorList>
            <person name="Beres S.B."/>
            <person name="Richter E.W."/>
            <person name="Nagiec M.J."/>
            <person name="Sumby P."/>
            <person name="Porcella S.F."/>
            <person name="DeLeo F.R."/>
            <person name="Musser J.M."/>
        </authorList>
    </citation>
    <scope>NUCLEOTIDE SEQUENCE [LARGE SCALE GENOMIC DNA]</scope>
    <source>
        <strain>MGAS10750</strain>
    </source>
</reference>
<sequence length="163" mass="18629">MLTKIGLYTGSFDPVTNGHLDIVKRASGLFDQIYVGIFDNPTKKSYFKLEVRKAMLTQALADFTNVIVVTSHERLAIDVAKELRVTHLIRGLRNATDFEYEENLEYFNHLLAPNIETVYLISRNKWQALSSSRVRELIHFQSSLEGLVPQSVIAQVEKMNEKT</sequence>
<protein>
    <recommendedName>
        <fullName evidence="1">Phosphopantetheine adenylyltransferase</fullName>
        <ecNumber evidence="1">2.7.7.3</ecNumber>
    </recommendedName>
    <alternativeName>
        <fullName evidence="1">Dephospho-CoA pyrophosphorylase</fullName>
    </alternativeName>
    <alternativeName>
        <fullName evidence="1">Pantetheine-phosphate adenylyltransferase</fullName>
        <shortName evidence="1">PPAT</shortName>
    </alternativeName>
</protein>
<organism>
    <name type="scientific">Streptococcus pyogenes serotype M4 (strain MGAS10750)</name>
    <dbReference type="NCBI Taxonomy" id="370554"/>
    <lineage>
        <taxon>Bacteria</taxon>
        <taxon>Bacillati</taxon>
        <taxon>Bacillota</taxon>
        <taxon>Bacilli</taxon>
        <taxon>Lactobacillales</taxon>
        <taxon>Streptococcaceae</taxon>
        <taxon>Streptococcus</taxon>
    </lineage>
</organism>
<dbReference type="EC" id="2.7.7.3" evidence="1"/>
<dbReference type="EMBL" id="CP000262">
    <property type="protein sequence ID" value="ABF38324.1"/>
    <property type="molecule type" value="Genomic_DNA"/>
</dbReference>
<dbReference type="SMR" id="Q1J5R2"/>
<dbReference type="KEGG" id="spi:MGAS10750_Spy1374"/>
<dbReference type="HOGENOM" id="CLU_100149_0_1_9"/>
<dbReference type="UniPathway" id="UPA00241">
    <property type="reaction ID" value="UER00355"/>
</dbReference>
<dbReference type="Proteomes" id="UP000002434">
    <property type="component" value="Chromosome"/>
</dbReference>
<dbReference type="GO" id="GO:0005737">
    <property type="term" value="C:cytoplasm"/>
    <property type="evidence" value="ECO:0007669"/>
    <property type="project" value="UniProtKB-SubCell"/>
</dbReference>
<dbReference type="GO" id="GO:0005524">
    <property type="term" value="F:ATP binding"/>
    <property type="evidence" value="ECO:0007669"/>
    <property type="project" value="UniProtKB-KW"/>
</dbReference>
<dbReference type="GO" id="GO:0004595">
    <property type="term" value="F:pantetheine-phosphate adenylyltransferase activity"/>
    <property type="evidence" value="ECO:0007669"/>
    <property type="project" value="UniProtKB-UniRule"/>
</dbReference>
<dbReference type="GO" id="GO:0015937">
    <property type="term" value="P:coenzyme A biosynthetic process"/>
    <property type="evidence" value="ECO:0007669"/>
    <property type="project" value="UniProtKB-UniRule"/>
</dbReference>
<dbReference type="CDD" id="cd02163">
    <property type="entry name" value="PPAT"/>
    <property type="match status" value="1"/>
</dbReference>
<dbReference type="Gene3D" id="3.40.50.620">
    <property type="entry name" value="HUPs"/>
    <property type="match status" value="1"/>
</dbReference>
<dbReference type="HAMAP" id="MF_00151">
    <property type="entry name" value="PPAT_bact"/>
    <property type="match status" value="1"/>
</dbReference>
<dbReference type="InterPro" id="IPR004821">
    <property type="entry name" value="Cyt_trans-like"/>
</dbReference>
<dbReference type="InterPro" id="IPR001980">
    <property type="entry name" value="PPAT"/>
</dbReference>
<dbReference type="InterPro" id="IPR014729">
    <property type="entry name" value="Rossmann-like_a/b/a_fold"/>
</dbReference>
<dbReference type="NCBIfam" id="TIGR01510">
    <property type="entry name" value="coaD_prev_kdtB"/>
    <property type="match status" value="1"/>
</dbReference>
<dbReference type="NCBIfam" id="TIGR00125">
    <property type="entry name" value="cyt_tran_rel"/>
    <property type="match status" value="1"/>
</dbReference>
<dbReference type="PANTHER" id="PTHR21342">
    <property type="entry name" value="PHOSPHOPANTETHEINE ADENYLYLTRANSFERASE"/>
    <property type="match status" value="1"/>
</dbReference>
<dbReference type="PANTHER" id="PTHR21342:SF1">
    <property type="entry name" value="PHOSPHOPANTETHEINE ADENYLYLTRANSFERASE"/>
    <property type="match status" value="1"/>
</dbReference>
<dbReference type="Pfam" id="PF01467">
    <property type="entry name" value="CTP_transf_like"/>
    <property type="match status" value="1"/>
</dbReference>
<dbReference type="PRINTS" id="PR01020">
    <property type="entry name" value="LPSBIOSNTHSS"/>
</dbReference>
<dbReference type="SUPFAM" id="SSF52374">
    <property type="entry name" value="Nucleotidylyl transferase"/>
    <property type="match status" value="1"/>
</dbReference>
<name>COAD_STRPF</name>
<keyword id="KW-0067">ATP-binding</keyword>
<keyword id="KW-0173">Coenzyme A biosynthesis</keyword>
<keyword id="KW-0963">Cytoplasm</keyword>
<keyword id="KW-0460">Magnesium</keyword>
<keyword id="KW-0547">Nucleotide-binding</keyword>
<keyword id="KW-0548">Nucleotidyltransferase</keyword>
<keyword id="KW-0808">Transferase</keyword>
<evidence type="ECO:0000255" key="1">
    <source>
        <dbReference type="HAMAP-Rule" id="MF_00151"/>
    </source>
</evidence>
<comment type="function">
    <text evidence="1">Reversibly transfers an adenylyl group from ATP to 4'-phosphopantetheine, yielding dephospho-CoA (dPCoA) and pyrophosphate.</text>
</comment>
<comment type="catalytic activity">
    <reaction evidence="1">
        <text>(R)-4'-phosphopantetheine + ATP + H(+) = 3'-dephospho-CoA + diphosphate</text>
        <dbReference type="Rhea" id="RHEA:19801"/>
        <dbReference type="ChEBI" id="CHEBI:15378"/>
        <dbReference type="ChEBI" id="CHEBI:30616"/>
        <dbReference type="ChEBI" id="CHEBI:33019"/>
        <dbReference type="ChEBI" id="CHEBI:57328"/>
        <dbReference type="ChEBI" id="CHEBI:61723"/>
        <dbReference type="EC" id="2.7.7.3"/>
    </reaction>
</comment>
<comment type="cofactor">
    <cofactor evidence="1">
        <name>Mg(2+)</name>
        <dbReference type="ChEBI" id="CHEBI:18420"/>
    </cofactor>
</comment>
<comment type="pathway">
    <text evidence="1">Cofactor biosynthesis; coenzyme A biosynthesis; CoA from (R)-pantothenate: step 4/5.</text>
</comment>
<comment type="subunit">
    <text evidence="1">Homohexamer.</text>
</comment>
<comment type="subcellular location">
    <subcellularLocation>
        <location evidence="1">Cytoplasm</location>
    </subcellularLocation>
</comment>
<comment type="similarity">
    <text evidence="1">Belongs to the bacterial CoaD family.</text>
</comment>